<accession>A3PGL6</accession>
<keyword id="KW-0687">Ribonucleoprotein</keyword>
<keyword id="KW-0689">Ribosomal protein</keyword>
<keyword id="KW-0694">RNA-binding</keyword>
<keyword id="KW-0699">rRNA-binding</keyword>
<protein>
    <recommendedName>
        <fullName evidence="1">Large ribosomal subunit protein uL22</fullName>
    </recommendedName>
    <alternativeName>
        <fullName evidence="2">50S ribosomal protein L22</fullName>
    </alternativeName>
</protein>
<name>RL22_CERS1</name>
<dbReference type="EMBL" id="CP000577">
    <property type="protein sequence ID" value="ABN75482.1"/>
    <property type="molecule type" value="Genomic_DNA"/>
</dbReference>
<dbReference type="RefSeq" id="WP_002722497.1">
    <property type="nucleotide sequence ID" value="NC_009049.1"/>
</dbReference>
<dbReference type="SMR" id="A3PGL6"/>
<dbReference type="GeneID" id="67445505"/>
<dbReference type="KEGG" id="rsh:Rsph17029_0366"/>
<dbReference type="HOGENOM" id="CLU_083987_3_0_5"/>
<dbReference type="GO" id="GO:0022625">
    <property type="term" value="C:cytosolic large ribosomal subunit"/>
    <property type="evidence" value="ECO:0007669"/>
    <property type="project" value="TreeGrafter"/>
</dbReference>
<dbReference type="GO" id="GO:0019843">
    <property type="term" value="F:rRNA binding"/>
    <property type="evidence" value="ECO:0007669"/>
    <property type="project" value="UniProtKB-UniRule"/>
</dbReference>
<dbReference type="GO" id="GO:0003735">
    <property type="term" value="F:structural constituent of ribosome"/>
    <property type="evidence" value="ECO:0007669"/>
    <property type="project" value="InterPro"/>
</dbReference>
<dbReference type="GO" id="GO:0006412">
    <property type="term" value="P:translation"/>
    <property type="evidence" value="ECO:0007669"/>
    <property type="project" value="UniProtKB-UniRule"/>
</dbReference>
<dbReference type="CDD" id="cd00336">
    <property type="entry name" value="Ribosomal_L22"/>
    <property type="match status" value="1"/>
</dbReference>
<dbReference type="Gene3D" id="3.90.470.10">
    <property type="entry name" value="Ribosomal protein L22/L17"/>
    <property type="match status" value="1"/>
</dbReference>
<dbReference type="HAMAP" id="MF_01331_B">
    <property type="entry name" value="Ribosomal_uL22_B"/>
    <property type="match status" value="1"/>
</dbReference>
<dbReference type="InterPro" id="IPR001063">
    <property type="entry name" value="Ribosomal_uL22"/>
</dbReference>
<dbReference type="InterPro" id="IPR005727">
    <property type="entry name" value="Ribosomal_uL22_bac/chlpt-type"/>
</dbReference>
<dbReference type="InterPro" id="IPR047867">
    <property type="entry name" value="Ribosomal_uL22_bac/org-type"/>
</dbReference>
<dbReference type="InterPro" id="IPR036394">
    <property type="entry name" value="Ribosomal_uL22_sf"/>
</dbReference>
<dbReference type="NCBIfam" id="TIGR01044">
    <property type="entry name" value="rplV_bact"/>
    <property type="match status" value="1"/>
</dbReference>
<dbReference type="PANTHER" id="PTHR13501">
    <property type="entry name" value="CHLOROPLAST 50S RIBOSOMAL PROTEIN L22-RELATED"/>
    <property type="match status" value="1"/>
</dbReference>
<dbReference type="PANTHER" id="PTHR13501:SF8">
    <property type="entry name" value="LARGE RIBOSOMAL SUBUNIT PROTEIN UL22M"/>
    <property type="match status" value="1"/>
</dbReference>
<dbReference type="Pfam" id="PF00237">
    <property type="entry name" value="Ribosomal_L22"/>
    <property type="match status" value="1"/>
</dbReference>
<dbReference type="SUPFAM" id="SSF54843">
    <property type="entry name" value="Ribosomal protein L22"/>
    <property type="match status" value="1"/>
</dbReference>
<proteinExistence type="inferred from homology"/>
<sequence>MGKEKNPRRVGENEAFAKVKMLRTSPQKLNLVAALIRGKKVDKAIADLTFSKKRISQDVLKCLQSAIANAENNHGLDVDELVVSEAFCGKNLVMKRGRPRARGRFGKIMKPFSELTIKVKQVGETA</sequence>
<evidence type="ECO:0000255" key="1">
    <source>
        <dbReference type="HAMAP-Rule" id="MF_01331"/>
    </source>
</evidence>
<evidence type="ECO:0000305" key="2"/>
<comment type="function">
    <text evidence="1">This protein binds specifically to 23S rRNA; its binding is stimulated by other ribosomal proteins, e.g. L4, L17, and L20. It is important during the early stages of 50S assembly. It makes multiple contacts with different domains of the 23S rRNA in the assembled 50S subunit and ribosome (By similarity).</text>
</comment>
<comment type="function">
    <text evidence="1">The globular domain of the protein is located near the polypeptide exit tunnel on the outside of the subunit, while an extended beta-hairpin is found that lines the wall of the exit tunnel in the center of the 70S ribosome.</text>
</comment>
<comment type="subunit">
    <text evidence="1">Part of the 50S ribosomal subunit.</text>
</comment>
<comment type="similarity">
    <text evidence="1">Belongs to the universal ribosomal protein uL22 family.</text>
</comment>
<reference key="1">
    <citation type="submission" date="2007-02" db="EMBL/GenBank/DDBJ databases">
        <title>Complete sequence of chromosome 1 of Rhodobacter sphaeroides ATCC 17029.</title>
        <authorList>
            <person name="Copeland A."/>
            <person name="Lucas S."/>
            <person name="Lapidus A."/>
            <person name="Barry K."/>
            <person name="Detter J.C."/>
            <person name="Glavina del Rio T."/>
            <person name="Hammon N."/>
            <person name="Israni S."/>
            <person name="Dalin E."/>
            <person name="Tice H."/>
            <person name="Pitluck S."/>
            <person name="Kiss H."/>
            <person name="Brettin T."/>
            <person name="Bruce D."/>
            <person name="Han C."/>
            <person name="Tapia R."/>
            <person name="Gilna P."/>
            <person name="Schmutz J."/>
            <person name="Larimer F."/>
            <person name="Land M."/>
            <person name="Hauser L."/>
            <person name="Kyrpides N."/>
            <person name="Mikhailova N."/>
            <person name="Richardson P."/>
            <person name="Mackenzie C."/>
            <person name="Choudhary M."/>
            <person name="Donohue T.J."/>
            <person name="Kaplan S."/>
        </authorList>
    </citation>
    <scope>NUCLEOTIDE SEQUENCE [LARGE SCALE GENOMIC DNA]</scope>
    <source>
        <strain>ATCC 17029 / ATH 2.4.9</strain>
    </source>
</reference>
<organism>
    <name type="scientific">Cereibacter sphaeroides (strain ATCC 17029 / ATH 2.4.9)</name>
    <name type="common">Rhodobacter sphaeroides</name>
    <dbReference type="NCBI Taxonomy" id="349101"/>
    <lineage>
        <taxon>Bacteria</taxon>
        <taxon>Pseudomonadati</taxon>
        <taxon>Pseudomonadota</taxon>
        <taxon>Alphaproteobacteria</taxon>
        <taxon>Rhodobacterales</taxon>
        <taxon>Paracoccaceae</taxon>
        <taxon>Cereibacter</taxon>
    </lineage>
</organism>
<gene>
    <name evidence="1" type="primary">rplV</name>
    <name type="ordered locus">Rsph17029_0366</name>
</gene>
<feature type="chain" id="PRO_0000354512" description="Large ribosomal subunit protein uL22">
    <location>
        <begin position="1"/>
        <end position="126"/>
    </location>
</feature>